<gene>
    <name evidence="1" type="primary">coaX</name>
    <name type="ordered locus">TT_C1008</name>
</gene>
<feature type="chain" id="PRO_0000267599" description="Type III pantothenate kinase">
    <location>
        <begin position="1"/>
        <end position="252"/>
    </location>
</feature>
<feature type="active site" description="Proton acceptor" evidence="1">
    <location>
        <position position="106"/>
    </location>
</feature>
<feature type="binding site" evidence="1">
    <location>
        <begin position="6"/>
        <end position="13"/>
    </location>
    <ligand>
        <name>ATP</name>
        <dbReference type="ChEBI" id="CHEBI:30616"/>
    </ligand>
</feature>
<feature type="binding site" evidence="1">
    <location>
        <begin position="104"/>
        <end position="107"/>
    </location>
    <ligand>
        <name>substrate</name>
    </ligand>
</feature>
<feature type="binding site" evidence="1">
    <location>
        <position position="128"/>
    </location>
    <ligand>
        <name>K(+)</name>
        <dbReference type="ChEBI" id="CHEBI:29103"/>
    </ligand>
</feature>
<feature type="binding site" evidence="1">
    <location>
        <position position="131"/>
    </location>
    <ligand>
        <name>ATP</name>
        <dbReference type="ChEBI" id="CHEBI:30616"/>
    </ligand>
</feature>
<feature type="binding site" evidence="1">
    <location>
        <position position="183"/>
    </location>
    <ligand>
        <name>substrate</name>
    </ligand>
</feature>
<name>COAX_THET2</name>
<accession>Q72IX3</accession>
<keyword id="KW-0067">ATP-binding</keyword>
<keyword id="KW-0173">Coenzyme A biosynthesis</keyword>
<keyword id="KW-0963">Cytoplasm</keyword>
<keyword id="KW-0418">Kinase</keyword>
<keyword id="KW-0479">Metal-binding</keyword>
<keyword id="KW-0547">Nucleotide-binding</keyword>
<keyword id="KW-0630">Potassium</keyword>
<keyword id="KW-0808">Transferase</keyword>
<comment type="function">
    <text evidence="1">Catalyzes the phosphorylation of pantothenate (Pan), the first step in CoA biosynthesis.</text>
</comment>
<comment type="catalytic activity">
    <reaction evidence="1">
        <text>(R)-pantothenate + ATP = (R)-4'-phosphopantothenate + ADP + H(+)</text>
        <dbReference type="Rhea" id="RHEA:16373"/>
        <dbReference type="ChEBI" id="CHEBI:10986"/>
        <dbReference type="ChEBI" id="CHEBI:15378"/>
        <dbReference type="ChEBI" id="CHEBI:29032"/>
        <dbReference type="ChEBI" id="CHEBI:30616"/>
        <dbReference type="ChEBI" id="CHEBI:456216"/>
        <dbReference type="EC" id="2.7.1.33"/>
    </reaction>
</comment>
<comment type="cofactor">
    <cofactor evidence="1">
        <name>NH4(+)</name>
        <dbReference type="ChEBI" id="CHEBI:28938"/>
    </cofactor>
    <cofactor evidence="1">
        <name>K(+)</name>
        <dbReference type="ChEBI" id="CHEBI:29103"/>
    </cofactor>
    <text evidence="1">A monovalent cation. Ammonium or potassium.</text>
</comment>
<comment type="pathway">
    <text evidence="1">Cofactor biosynthesis; coenzyme A biosynthesis; CoA from (R)-pantothenate: step 1/5.</text>
</comment>
<comment type="subunit">
    <text evidence="1">Homodimer.</text>
</comment>
<comment type="subcellular location">
    <subcellularLocation>
        <location evidence="1">Cytoplasm</location>
    </subcellularLocation>
</comment>
<comment type="similarity">
    <text evidence="1">Belongs to the type III pantothenate kinase family.</text>
</comment>
<dbReference type="EC" id="2.7.1.33" evidence="1"/>
<dbReference type="EMBL" id="AE017221">
    <property type="protein sequence ID" value="AAS81350.1"/>
    <property type="molecule type" value="Genomic_DNA"/>
</dbReference>
<dbReference type="RefSeq" id="WP_011173427.1">
    <property type="nucleotide sequence ID" value="NC_005835.1"/>
</dbReference>
<dbReference type="SMR" id="Q72IX3"/>
<dbReference type="KEGG" id="tth:TT_C1008"/>
<dbReference type="eggNOG" id="COG1521">
    <property type="taxonomic scope" value="Bacteria"/>
</dbReference>
<dbReference type="HOGENOM" id="CLU_066627_1_0_0"/>
<dbReference type="OrthoDB" id="9804707at2"/>
<dbReference type="UniPathway" id="UPA00241">
    <property type="reaction ID" value="UER00352"/>
</dbReference>
<dbReference type="Proteomes" id="UP000000592">
    <property type="component" value="Chromosome"/>
</dbReference>
<dbReference type="GO" id="GO:0005737">
    <property type="term" value="C:cytoplasm"/>
    <property type="evidence" value="ECO:0007669"/>
    <property type="project" value="UniProtKB-SubCell"/>
</dbReference>
<dbReference type="GO" id="GO:0005524">
    <property type="term" value="F:ATP binding"/>
    <property type="evidence" value="ECO:0007669"/>
    <property type="project" value="UniProtKB-UniRule"/>
</dbReference>
<dbReference type="GO" id="GO:0046872">
    <property type="term" value="F:metal ion binding"/>
    <property type="evidence" value="ECO:0007669"/>
    <property type="project" value="UniProtKB-KW"/>
</dbReference>
<dbReference type="GO" id="GO:0004594">
    <property type="term" value="F:pantothenate kinase activity"/>
    <property type="evidence" value="ECO:0007669"/>
    <property type="project" value="UniProtKB-UniRule"/>
</dbReference>
<dbReference type="GO" id="GO:0015937">
    <property type="term" value="P:coenzyme A biosynthetic process"/>
    <property type="evidence" value="ECO:0007669"/>
    <property type="project" value="UniProtKB-UniRule"/>
</dbReference>
<dbReference type="CDD" id="cd24015">
    <property type="entry name" value="ASKHA_NBD_PanK-III"/>
    <property type="match status" value="1"/>
</dbReference>
<dbReference type="Gene3D" id="3.30.420.40">
    <property type="match status" value="2"/>
</dbReference>
<dbReference type="HAMAP" id="MF_01274">
    <property type="entry name" value="Pantothen_kinase_3"/>
    <property type="match status" value="1"/>
</dbReference>
<dbReference type="InterPro" id="IPR043129">
    <property type="entry name" value="ATPase_NBD"/>
</dbReference>
<dbReference type="InterPro" id="IPR004619">
    <property type="entry name" value="Type_III_PanK"/>
</dbReference>
<dbReference type="NCBIfam" id="TIGR00671">
    <property type="entry name" value="baf"/>
    <property type="match status" value="1"/>
</dbReference>
<dbReference type="NCBIfam" id="NF009848">
    <property type="entry name" value="PRK13318.1-6"/>
    <property type="match status" value="1"/>
</dbReference>
<dbReference type="NCBIfam" id="NF009855">
    <property type="entry name" value="PRK13321.1"/>
    <property type="match status" value="1"/>
</dbReference>
<dbReference type="PANTHER" id="PTHR34265">
    <property type="entry name" value="TYPE III PANTOTHENATE KINASE"/>
    <property type="match status" value="1"/>
</dbReference>
<dbReference type="PANTHER" id="PTHR34265:SF1">
    <property type="entry name" value="TYPE III PANTOTHENATE KINASE"/>
    <property type="match status" value="1"/>
</dbReference>
<dbReference type="Pfam" id="PF03309">
    <property type="entry name" value="Pan_kinase"/>
    <property type="match status" value="1"/>
</dbReference>
<dbReference type="SUPFAM" id="SSF53067">
    <property type="entry name" value="Actin-like ATPase domain"/>
    <property type="match status" value="2"/>
</dbReference>
<proteinExistence type="inferred from homology"/>
<sequence length="252" mass="27127">MLLAVDIGNTSTALGLFSGEELIAHFRIHTDRMRMESEYRVILKNLFALEDLPPPKAALLASVVPPVEREMKRAIERLFGVEARVVEAADTGLEVLIDNPREAGADRLVNAVGALAYPSPTGRYIVVDFGTATTFDLVEAPNRYLGGAIAIGPQTAADALAQRTAKLPRIDLTPPKAAVGKNTLEALRSGLVLGYAALVEGMVRRFKEEAGEALVIATGGFAETLRPLCPCFDVVDEDLTLKGLLRIHLERG</sequence>
<reference key="1">
    <citation type="journal article" date="2004" name="Nat. Biotechnol.">
        <title>The genome sequence of the extreme thermophile Thermus thermophilus.</title>
        <authorList>
            <person name="Henne A."/>
            <person name="Brueggemann H."/>
            <person name="Raasch C."/>
            <person name="Wiezer A."/>
            <person name="Hartsch T."/>
            <person name="Liesegang H."/>
            <person name="Johann A."/>
            <person name="Lienard T."/>
            <person name="Gohl O."/>
            <person name="Martinez-Arias R."/>
            <person name="Jacobi C."/>
            <person name="Starkuviene V."/>
            <person name="Schlenczeck S."/>
            <person name="Dencker S."/>
            <person name="Huber R."/>
            <person name="Klenk H.-P."/>
            <person name="Kramer W."/>
            <person name="Merkl R."/>
            <person name="Gottschalk G."/>
            <person name="Fritz H.-J."/>
        </authorList>
    </citation>
    <scope>NUCLEOTIDE SEQUENCE [LARGE SCALE GENOMIC DNA]</scope>
    <source>
        <strain>ATCC BAA-163 / DSM 7039 / HB27</strain>
    </source>
</reference>
<protein>
    <recommendedName>
        <fullName evidence="1">Type III pantothenate kinase</fullName>
        <ecNumber evidence="1">2.7.1.33</ecNumber>
    </recommendedName>
    <alternativeName>
        <fullName evidence="1">PanK-III</fullName>
    </alternativeName>
    <alternativeName>
        <fullName evidence="1">Pantothenic acid kinase</fullName>
    </alternativeName>
</protein>
<evidence type="ECO:0000255" key="1">
    <source>
        <dbReference type="HAMAP-Rule" id="MF_01274"/>
    </source>
</evidence>
<organism>
    <name type="scientific">Thermus thermophilus (strain ATCC BAA-163 / DSM 7039 / HB27)</name>
    <dbReference type="NCBI Taxonomy" id="262724"/>
    <lineage>
        <taxon>Bacteria</taxon>
        <taxon>Thermotogati</taxon>
        <taxon>Deinococcota</taxon>
        <taxon>Deinococci</taxon>
        <taxon>Thermales</taxon>
        <taxon>Thermaceae</taxon>
        <taxon>Thermus</taxon>
    </lineage>
</organism>